<organism>
    <name type="scientific">Saccharomyces cerevisiae (strain ATCC 204508 / S288c)</name>
    <name type="common">Baker's yeast</name>
    <dbReference type="NCBI Taxonomy" id="559292"/>
    <lineage>
        <taxon>Eukaryota</taxon>
        <taxon>Fungi</taxon>
        <taxon>Dikarya</taxon>
        <taxon>Ascomycota</taxon>
        <taxon>Saccharomycotina</taxon>
        <taxon>Saccharomycetes</taxon>
        <taxon>Saccharomycetales</taxon>
        <taxon>Saccharomycetaceae</taxon>
        <taxon>Saccharomyces</taxon>
    </lineage>
</organism>
<keyword id="KW-0173">Coenzyme A biosynthesis</keyword>
<keyword id="KW-0963">Cytoplasm</keyword>
<keyword id="KW-0597">Phosphoprotein</keyword>
<keyword id="KW-1185">Reference proteome</keyword>
<gene>
    <name type="primary">CAB3</name>
    <name type="ordered locus">YKL088W</name>
</gene>
<accession>P36076</accession>
<accession>D6VXK0</accession>
<evidence type="ECO:0000256" key="1">
    <source>
        <dbReference type="SAM" id="MobiDB-lite"/>
    </source>
</evidence>
<evidence type="ECO:0000269" key="2">
    <source>
    </source>
</evidence>
<evidence type="ECO:0000269" key="3">
    <source>
    </source>
</evidence>
<evidence type="ECO:0000269" key="4">
    <source>
    </source>
</evidence>
<evidence type="ECO:0000269" key="5">
    <source>
    </source>
</evidence>
<evidence type="ECO:0000305" key="6"/>
<evidence type="ECO:0007744" key="7">
    <source>
    </source>
</evidence>
<evidence type="ECO:0007744" key="8">
    <source>
    </source>
</evidence>
<evidence type="ECO:0007744" key="9">
    <source>
    </source>
</evidence>
<evidence type="ECO:0007744" key="10">
    <source>
    </source>
</evidence>
<protein>
    <recommendedName>
        <fullName>Coenzyme A biosynthesis protein 3</fullName>
    </recommendedName>
</protein>
<reference key="1">
    <citation type="journal article" date="1994" name="Nature">
        <title>Complete DNA sequence of yeast chromosome XI.</title>
        <authorList>
            <person name="Dujon B."/>
            <person name="Alexandraki D."/>
            <person name="Andre B."/>
            <person name="Ansorge W."/>
            <person name="Baladron V."/>
            <person name="Ballesta J.P.G."/>
            <person name="Banrevi A."/>
            <person name="Bolle P.-A."/>
            <person name="Bolotin-Fukuhara M."/>
            <person name="Bossier P."/>
            <person name="Bou G."/>
            <person name="Boyer J."/>
            <person name="Buitrago M.J."/>
            <person name="Cheret G."/>
            <person name="Colleaux L."/>
            <person name="Daignan-Fornier B."/>
            <person name="del Rey F."/>
            <person name="Dion C."/>
            <person name="Domdey H."/>
            <person name="Duesterhoeft A."/>
            <person name="Duesterhus S."/>
            <person name="Entian K.-D."/>
            <person name="Erfle H."/>
            <person name="Esteban P.F."/>
            <person name="Feldmann H."/>
            <person name="Fernandes L."/>
            <person name="Fobo G.M."/>
            <person name="Fritz C."/>
            <person name="Fukuhara H."/>
            <person name="Gabel C."/>
            <person name="Gaillon L."/>
            <person name="Garcia-Cantalejo J.M."/>
            <person name="Garcia-Ramirez J.J."/>
            <person name="Gent M.E."/>
            <person name="Ghazvini M."/>
            <person name="Goffeau A."/>
            <person name="Gonzalez A."/>
            <person name="Grothues D."/>
            <person name="Guerreiro P."/>
            <person name="Hegemann J.H."/>
            <person name="Hewitt N."/>
            <person name="Hilger F."/>
            <person name="Hollenberg C.P."/>
            <person name="Horaitis O."/>
            <person name="Indge K.J."/>
            <person name="Jacquier A."/>
            <person name="James C.M."/>
            <person name="Jauniaux J.-C."/>
            <person name="Jimenez A."/>
            <person name="Keuchel H."/>
            <person name="Kirchrath L."/>
            <person name="Kleine K."/>
            <person name="Koetter P."/>
            <person name="Legrain P."/>
            <person name="Liebl S."/>
            <person name="Louis E.J."/>
            <person name="Maia e Silva A."/>
            <person name="Marck C."/>
            <person name="Monnier A.-L."/>
            <person name="Moestl D."/>
            <person name="Mueller S."/>
            <person name="Obermaier B."/>
            <person name="Oliver S.G."/>
            <person name="Pallier C."/>
            <person name="Pascolo S."/>
            <person name="Pfeiffer F."/>
            <person name="Philippsen P."/>
            <person name="Planta R.J."/>
            <person name="Pohl F.M."/>
            <person name="Pohl T.M."/>
            <person name="Poehlmann R."/>
            <person name="Portetelle D."/>
            <person name="Purnelle B."/>
            <person name="Puzos V."/>
            <person name="Ramezani Rad M."/>
            <person name="Rasmussen S.W."/>
            <person name="Remacha M.A."/>
            <person name="Revuelta J.L."/>
            <person name="Richard G.-F."/>
            <person name="Rieger M."/>
            <person name="Rodrigues-Pousada C."/>
            <person name="Rose M."/>
            <person name="Rupp T."/>
            <person name="Santos M.A."/>
            <person name="Schwager C."/>
            <person name="Sensen C."/>
            <person name="Skala J."/>
            <person name="Soares H."/>
            <person name="Sor F."/>
            <person name="Stegemann J."/>
            <person name="Tettelin H."/>
            <person name="Thierry A."/>
            <person name="Tzermia M."/>
            <person name="Urrestarazu L.A."/>
            <person name="van Dyck L."/>
            <person name="van Vliet-Reedijk J.C."/>
            <person name="Valens M."/>
            <person name="Vandenbol M."/>
            <person name="Vilela C."/>
            <person name="Vissers S."/>
            <person name="von Wettstein D."/>
            <person name="Voss H."/>
            <person name="Wiemann S."/>
            <person name="Xu G."/>
            <person name="Zimmermann J."/>
            <person name="Haasemann M."/>
            <person name="Becker I."/>
            <person name="Mewes H.-W."/>
        </authorList>
    </citation>
    <scope>NUCLEOTIDE SEQUENCE [LARGE SCALE GENOMIC DNA]</scope>
    <source>
        <strain>ATCC 204508 / S288c</strain>
    </source>
</reference>
<reference key="2">
    <citation type="journal article" date="2014" name="G3 (Bethesda)">
        <title>The reference genome sequence of Saccharomyces cerevisiae: Then and now.</title>
        <authorList>
            <person name="Engel S.R."/>
            <person name="Dietrich F.S."/>
            <person name="Fisk D.G."/>
            <person name="Binkley G."/>
            <person name="Balakrishnan R."/>
            <person name="Costanzo M.C."/>
            <person name="Dwight S.S."/>
            <person name="Hitz B.C."/>
            <person name="Karra K."/>
            <person name="Nash R.S."/>
            <person name="Weng S."/>
            <person name="Wong E.D."/>
            <person name="Lloyd P."/>
            <person name="Skrzypek M.S."/>
            <person name="Miyasato S.R."/>
            <person name="Simison M."/>
            <person name="Cherry J.M."/>
        </authorList>
    </citation>
    <scope>GENOME REANNOTATION</scope>
    <source>
        <strain>ATCC 204508 / S288c</strain>
    </source>
</reference>
<reference key="3">
    <citation type="journal article" date="2003" name="Mol. Cell">
        <title>Assigning function to yeast proteins by integration of technologies.</title>
        <authorList>
            <person name="Hazbun T.R."/>
            <person name="Malmstroem L."/>
            <person name="Anderson S."/>
            <person name="Graczyk B.J."/>
            <person name="Fox B."/>
            <person name="Riffle M."/>
            <person name="Sundin B.A."/>
            <person name="Aranda J.D."/>
            <person name="McDonald W.H."/>
            <person name="Chiu C.-H."/>
            <person name="Snydsman B.E."/>
            <person name="Bradley P."/>
            <person name="Muller E.G.D."/>
            <person name="Fields S."/>
            <person name="Baker D."/>
            <person name="Yates J.R. III"/>
            <person name="Davis T.N."/>
        </authorList>
    </citation>
    <scope>IDENTIFICATION BY MASS SPECTROMETRY</scope>
</reference>
<reference key="4">
    <citation type="journal article" date="2003" name="Nature">
        <title>Global analysis of protein localization in budding yeast.</title>
        <authorList>
            <person name="Huh W.-K."/>
            <person name="Falvo J.V."/>
            <person name="Gerke L.C."/>
            <person name="Carroll A.S."/>
            <person name="Howson R.W."/>
            <person name="Weissman J.S."/>
            <person name="O'Shea E.K."/>
        </authorList>
    </citation>
    <scope>SUBCELLULAR LOCATION [LARGE SCALE ANALYSIS]</scope>
</reference>
<reference key="5">
    <citation type="journal article" date="2003" name="Nature">
        <title>Global analysis of protein expression in yeast.</title>
        <authorList>
            <person name="Ghaemmaghami S."/>
            <person name="Huh W.-K."/>
            <person name="Bower K."/>
            <person name="Howson R.W."/>
            <person name="Belle A."/>
            <person name="Dephoure N."/>
            <person name="O'Shea E.K."/>
            <person name="Weissman J.S."/>
        </authorList>
    </citation>
    <scope>LEVEL OF PROTEIN EXPRESSION [LARGE SCALE ANALYSIS]</scope>
</reference>
<reference key="6">
    <citation type="journal article" date="2007" name="J. Proteome Res.">
        <title>Large-scale phosphorylation analysis of alpha-factor-arrested Saccharomyces cerevisiae.</title>
        <authorList>
            <person name="Li X."/>
            <person name="Gerber S.A."/>
            <person name="Rudner A.D."/>
            <person name="Beausoleil S.A."/>
            <person name="Haas W."/>
            <person name="Villen J."/>
            <person name="Elias J.E."/>
            <person name="Gygi S.P."/>
        </authorList>
    </citation>
    <scope>PHOSPHORYLATION [LARGE SCALE ANALYSIS] AT SER-42; SER-116; SER-121 AND SER-124</scope>
    <scope>IDENTIFICATION BY MASS SPECTROMETRY [LARGE SCALE ANALYSIS]</scope>
    <source>
        <strain>ADR376</strain>
    </source>
</reference>
<reference key="7">
    <citation type="journal article" date="2007" name="Proc. Natl. Acad. Sci. U.S.A.">
        <title>Analysis of phosphorylation sites on proteins from Saccharomyces cerevisiae by electron transfer dissociation (ETD) mass spectrometry.</title>
        <authorList>
            <person name="Chi A."/>
            <person name="Huttenhower C."/>
            <person name="Geer L.Y."/>
            <person name="Coon J.J."/>
            <person name="Syka J.E.P."/>
            <person name="Bai D.L."/>
            <person name="Shabanowitz J."/>
            <person name="Burke D.J."/>
            <person name="Troyanskaya O.G."/>
            <person name="Hunt D.F."/>
        </authorList>
    </citation>
    <scope>PHOSPHORYLATION [LARGE SCALE ANALYSIS] AT SER-42</scope>
    <scope>IDENTIFICATION BY MASS SPECTROMETRY [LARGE SCALE ANALYSIS]</scope>
</reference>
<reference key="8">
    <citation type="journal article" date="2008" name="Mol. Cell. Proteomics">
        <title>A multidimensional chromatography technology for in-depth phosphoproteome analysis.</title>
        <authorList>
            <person name="Albuquerque C.P."/>
            <person name="Smolka M.B."/>
            <person name="Payne S.H."/>
            <person name="Bafna V."/>
            <person name="Eng J."/>
            <person name="Zhou H."/>
        </authorList>
    </citation>
    <scope>PHOSPHORYLATION [LARGE SCALE ANALYSIS] AT SER-42 AND SER-264</scope>
    <scope>IDENTIFICATION BY MASS SPECTROMETRY [LARGE SCALE ANALYSIS]</scope>
</reference>
<reference key="9">
    <citation type="journal article" date="2009" name="Curr. Genet.">
        <title>Genetic analysis of coenzyme A biosynthesis in the yeast Saccharomyces cerevisiae: identification of a conditional mutation in the pantothenate kinase gene CAB1.</title>
        <authorList>
            <person name="Olzhausen J."/>
            <person name="Schuebbe S."/>
            <person name="Schueller H.-J."/>
        </authorList>
    </citation>
    <scope>FUNCTION</scope>
</reference>
<reference key="10">
    <citation type="journal article" date="2009" name="Nat. Chem. Biol.">
        <title>Moonlighting proteins Hal3 and Vhs3 form a heteromeric PPCDC with Ykl088w in yeast CoA biosynthesis.</title>
        <authorList>
            <person name="Ruiz A."/>
            <person name="Gonzalez A."/>
            <person name="Munoz I."/>
            <person name="Serrano R."/>
            <person name="Abrie J.A."/>
            <person name="Strauss E."/>
            <person name="Arino J."/>
        </authorList>
    </citation>
    <scope>FUNCTION</scope>
    <scope>MUTAGENESIS OF CYS-478</scope>
    <scope>INTERACTION WITH HAL3 AND VHS3</scope>
</reference>
<reference key="11">
    <citation type="journal article" date="2009" name="Science">
        <title>Global analysis of Cdk1 substrate phosphorylation sites provides insights into evolution.</title>
        <authorList>
            <person name="Holt L.J."/>
            <person name="Tuch B.B."/>
            <person name="Villen J."/>
            <person name="Johnson A.D."/>
            <person name="Gygi S.P."/>
            <person name="Morgan D.O."/>
        </authorList>
    </citation>
    <scope>PHOSPHORYLATION [LARGE SCALE ANALYSIS] AT SER-116 AND SER-121</scope>
    <scope>IDENTIFICATION BY MASS SPECTROMETRY [LARGE SCALE ANALYSIS]</scope>
</reference>
<proteinExistence type="evidence at protein level"/>
<feature type="chain" id="PRO_0000182039" description="Coenzyme A biosynthesis protein 3">
    <location>
        <begin position="1"/>
        <end position="571"/>
    </location>
</feature>
<feature type="region of interest" description="Disordered" evidence="1">
    <location>
        <begin position="1"/>
        <end position="72"/>
    </location>
</feature>
<feature type="region of interest" description="Disordered" evidence="1">
    <location>
        <begin position="100"/>
        <end position="120"/>
    </location>
</feature>
<feature type="region of interest" description="Disordered" evidence="1">
    <location>
        <begin position="140"/>
        <end position="171"/>
    </location>
</feature>
<feature type="region of interest" description="Disordered" evidence="1">
    <location>
        <begin position="209"/>
        <end position="244"/>
    </location>
</feature>
<feature type="region of interest" description="Disordered" evidence="1">
    <location>
        <begin position="507"/>
        <end position="571"/>
    </location>
</feature>
<feature type="compositionally biased region" description="Polar residues" evidence="1">
    <location>
        <begin position="8"/>
        <end position="35"/>
    </location>
</feature>
<feature type="compositionally biased region" description="Basic and acidic residues" evidence="1">
    <location>
        <begin position="43"/>
        <end position="59"/>
    </location>
</feature>
<feature type="compositionally biased region" description="Polar residues" evidence="1">
    <location>
        <begin position="60"/>
        <end position="72"/>
    </location>
</feature>
<feature type="compositionally biased region" description="Low complexity" evidence="1">
    <location>
        <begin position="146"/>
        <end position="171"/>
    </location>
</feature>
<feature type="compositionally biased region" description="Acidic residues" evidence="1">
    <location>
        <begin position="516"/>
        <end position="571"/>
    </location>
</feature>
<feature type="modified residue" description="Phosphoserine" evidence="7 8 9">
    <location>
        <position position="42"/>
    </location>
</feature>
<feature type="modified residue" description="Phosphoserine" evidence="8 10">
    <location>
        <position position="116"/>
    </location>
</feature>
<feature type="modified residue" description="Phosphoserine" evidence="8 10">
    <location>
        <position position="121"/>
    </location>
</feature>
<feature type="modified residue" description="Phosphoserine" evidence="8">
    <location>
        <position position="124"/>
    </location>
</feature>
<feature type="modified residue" description="Phosphoserine" evidence="9">
    <location>
        <position position="264"/>
    </location>
</feature>
<feature type="mutagenesis site" description="Abolishes PPCDC activity." evidence="5">
    <original>C</original>
    <variation>S</variation>
    <location>
        <position position="478"/>
    </location>
</feature>
<comment type="function">
    <text evidence="4 5">Component of the phosphopantothenoylcysteine decarboxylase (PPCDC) involved in the coenzyme A synthesis.</text>
</comment>
<comment type="subunit">
    <text>Component of the phosphopantothenoylcysteine decarboxylase (PPCDC) complex, a heterotrimer composed of CAB3, HAL3 and VHS3.</text>
</comment>
<comment type="interaction">
    <interactant intactId="EBI-26778">
        <id>P36076</id>
    </interactant>
    <interactant intactId="EBI-25089">
        <id>P40506</id>
        <label>CAB2</label>
    </interactant>
    <organismsDiffer>false</organismsDiffer>
    <experiments>6</experiments>
</comment>
<comment type="interaction">
    <interactant intactId="EBI-26778">
        <id>P36076</id>
    </interactant>
    <interactant intactId="EBI-26778">
        <id>P36076</id>
        <label>CAB3</label>
    </interactant>
    <organismsDiffer>false</organismsDiffer>
    <experiments>3</experiments>
</comment>
<comment type="interaction">
    <interactant intactId="EBI-26778">
        <id>P36076</id>
    </interactant>
    <interactant intactId="EBI-23648">
        <id>P53332</id>
        <label>CAB4</label>
    </interactant>
    <organismsDiffer>false</organismsDiffer>
    <experiments>5</experiments>
</comment>
<comment type="interaction">
    <interactant intactId="EBI-26778">
        <id>P36076</id>
    </interactant>
    <interactant intactId="EBI-22174">
        <id>Q03941</id>
        <label>CAB5</label>
    </interactant>
    <organismsDiffer>false</organismsDiffer>
    <experiments>7</experiments>
</comment>
<comment type="interaction">
    <interactant intactId="EBI-26778">
        <id>P36076</id>
    </interactant>
    <interactant intactId="EBI-9548">
        <id>P19454</id>
        <label>CKA2</label>
    </interactant>
    <organismsDiffer>false</organismsDiffer>
    <experiments>3</experiments>
</comment>
<comment type="interaction">
    <interactant intactId="EBI-26778">
        <id>P36076</id>
    </interactant>
    <interactant intactId="EBI-13807">
        <id>P26570</id>
        <label>PPZ1</label>
    </interactant>
    <organismsDiffer>false</organismsDiffer>
    <experiments>7</experiments>
</comment>
<comment type="interaction">
    <interactant intactId="EBI-26778">
        <id>P36076</id>
    </interactant>
    <interactant intactId="EBI-13815">
        <id>P33329</id>
        <label>PPZ2</label>
    </interactant>
    <organismsDiffer>false</organismsDiffer>
    <experiments>5</experiments>
</comment>
<comment type="interaction">
    <interactant intactId="EBI-26778">
        <id>P36076</id>
    </interactant>
    <interactant intactId="EBI-17250">
        <id>P36024</id>
        <label>SIS2</label>
    </interactant>
    <organismsDiffer>false</organismsDiffer>
    <experiments>10</experiments>
</comment>
<comment type="interaction">
    <interactant intactId="EBI-26778">
        <id>P36076</id>
    </interactant>
    <interactant intactId="EBI-30482">
        <id>Q08438</id>
        <label>VHS3</label>
    </interactant>
    <organismsDiffer>false</organismsDiffer>
    <experiments>9</experiments>
</comment>
<comment type="subcellular location">
    <subcellularLocation>
        <location evidence="2">Cytoplasm</location>
    </subcellularLocation>
</comment>
<comment type="miscellaneous">
    <text evidence="3">Present with 2940 molecules/cell in log phase SD medium.</text>
</comment>
<comment type="similarity">
    <text evidence="6">Belongs to the HFCD (homooligomeric flavin containing Cys decarboxylase) superfamily.</text>
</comment>
<sequence>MTDEKVNSDQNMNGKQGVNLISSLPTTQVPVSILTNKERRKSIHDESNFERSDSHEDQSKSNSNRRNIYKNDYSTNLRDFSFANLKQNSERNKDGHEIQINTSMPANTNGQQKRFSPSLPSAVSFTVPEVERLPYHRYSISNKPGKQQQQQEQLQQNQQQEEQQKAQLQEQNQRAKQQEEVKQIQEQVQKKQTERQQLIDEKERIANAIFKENTTNDGTDIRKHSVSSGTSNSEDEVDSPSMEKNSIVHMPGDFIYFNPKSNASKPITAKAAPLSANNSTHKNKEVITAPTGPRVPFTEFFQKEDDKKFHILIGATGSVATIKVPLIIDKLFKIYGPEKISIQLIVTKPAEHFLKGLKMSTHVKIWREEDAWVFDAVNKNDTSLSLNLILHHELRKWADIFLIAPLSANTLAKLANGICNNLLTSVMRDWSPLTPVLIAPAMNTFMYINPMTKKHLTSLVQDYPFIQVLKPVEKVLICGDIGMGGMREWTDIVEIVRRRINEIRKARDEETGDKEQEQEEQEGADNEDDDDEDDEEDEEDEEEEEALNETASDESNDEEDEEDEEDVKTEV</sequence>
<dbReference type="EMBL" id="Z28088">
    <property type="protein sequence ID" value="CAA81926.1"/>
    <property type="molecule type" value="Genomic_DNA"/>
</dbReference>
<dbReference type="EMBL" id="BK006944">
    <property type="protein sequence ID" value="DAA09070.1"/>
    <property type="molecule type" value="Genomic_DNA"/>
</dbReference>
<dbReference type="PIR" id="S37913">
    <property type="entry name" value="S37913"/>
</dbReference>
<dbReference type="RefSeq" id="NP_012835.1">
    <property type="nucleotide sequence ID" value="NM_001179654.1"/>
</dbReference>
<dbReference type="SMR" id="P36076"/>
<dbReference type="BioGRID" id="34045">
    <property type="interactions" value="47"/>
</dbReference>
<dbReference type="ComplexPortal" id="CPX-393">
    <property type="entry name" value="Phosphopantothenoylcysteine decarboxylase complex"/>
</dbReference>
<dbReference type="ComplexPortal" id="CPX-396">
    <property type="entry name" value="Coenzyme A-synthesizing protein complex"/>
</dbReference>
<dbReference type="DIP" id="DIP-4475N"/>
<dbReference type="FunCoup" id="P36076">
    <property type="interactions" value="245"/>
</dbReference>
<dbReference type="IntAct" id="P36076">
    <property type="interactions" value="76"/>
</dbReference>
<dbReference type="MINT" id="P36076"/>
<dbReference type="STRING" id="4932.YKL088W"/>
<dbReference type="iPTMnet" id="P36076"/>
<dbReference type="PaxDb" id="4932-YKL088W"/>
<dbReference type="PeptideAtlas" id="P36076"/>
<dbReference type="EnsemblFungi" id="YKL088W_mRNA">
    <property type="protein sequence ID" value="YKL088W"/>
    <property type="gene ID" value="YKL088W"/>
</dbReference>
<dbReference type="GeneID" id="853774"/>
<dbReference type="KEGG" id="sce:YKL088W"/>
<dbReference type="AGR" id="SGD:S000001571"/>
<dbReference type="SGD" id="S000001571">
    <property type="gene designation" value="CAB3"/>
</dbReference>
<dbReference type="VEuPathDB" id="FungiDB:YKL088W"/>
<dbReference type="eggNOG" id="KOG0672">
    <property type="taxonomic scope" value="Eukaryota"/>
</dbReference>
<dbReference type="GeneTree" id="ENSGT00440000038107"/>
<dbReference type="HOGENOM" id="CLU_014402_2_1_1"/>
<dbReference type="InParanoid" id="P36076"/>
<dbReference type="OMA" id="HEIQINT"/>
<dbReference type="OrthoDB" id="1532798at2759"/>
<dbReference type="BioCyc" id="MetaCyc:MONOMER3O-299"/>
<dbReference type="BioCyc" id="YEAST:MONOMER3O-299"/>
<dbReference type="Reactome" id="R-SCE-196783">
    <property type="pathway name" value="Coenzyme A biosynthesis"/>
</dbReference>
<dbReference type="BioGRID-ORCS" id="853774">
    <property type="hits" value="1 hit in 10 CRISPR screens"/>
</dbReference>
<dbReference type="PRO" id="PR:P36076"/>
<dbReference type="Proteomes" id="UP000002311">
    <property type="component" value="Chromosome XI"/>
</dbReference>
<dbReference type="RNAct" id="P36076">
    <property type="molecule type" value="protein"/>
</dbReference>
<dbReference type="GO" id="GO:1990143">
    <property type="term" value="C:CoA-synthesizing protein complex"/>
    <property type="evidence" value="ECO:0000314"/>
    <property type="project" value="SGD"/>
</dbReference>
<dbReference type="GO" id="GO:0005737">
    <property type="term" value="C:cytoplasm"/>
    <property type="evidence" value="ECO:0007005"/>
    <property type="project" value="SGD"/>
</dbReference>
<dbReference type="GO" id="GO:0071513">
    <property type="term" value="C:phosphopantothenoylcysteine decarboxylase complex"/>
    <property type="evidence" value="ECO:0000314"/>
    <property type="project" value="SGD"/>
</dbReference>
<dbReference type="GO" id="GO:0003824">
    <property type="term" value="F:catalytic activity"/>
    <property type="evidence" value="ECO:0007669"/>
    <property type="project" value="InterPro"/>
</dbReference>
<dbReference type="GO" id="GO:0010181">
    <property type="term" value="F:FMN binding"/>
    <property type="evidence" value="ECO:0000318"/>
    <property type="project" value="GO_Central"/>
</dbReference>
<dbReference type="GO" id="GO:0042802">
    <property type="term" value="F:identical protein binding"/>
    <property type="evidence" value="ECO:0000353"/>
    <property type="project" value="IntAct"/>
</dbReference>
<dbReference type="GO" id="GO:0015937">
    <property type="term" value="P:coenzyme A biosynthetic process"/>
    <property type="evidence" value="ECO:0000316"/>
    <property type="project" value="SGD"/>
</dbReference>
<dbReference type="FunFam" id="3.40.50.1950:FF:000010">
    <property type="entry name" value="Coenzyme A biosynthesis protein 3"/>
    <property type="match status" value="1"/>
</dbReference>
<dbReference type="Gene3D" id="3.40.50.1950">
    <property type="entry name" value="Flavin prenyltransferase-like"/>
    <property type="match status" value="1"/>
</dbReference>
<dbReference type="InterPro" id="IPR036551">
    <property type="entry name" value="Flavin_trans-like"/>
</dbReference>
<dbReference type="InterPro" id="IPR003382">
    <property type="entry name" value="Flavoprotein"/>
</dbReference>
<dbReference type="PANTHER" id="PTHR14359">
    <property type="entry name" value="HOMO-OLIGOMERIC FLAVIN CONTAINING CYS DECARBOXYLASE FAMILY"/>
    <property type="match status" value="1"/>
</dbReference>
<dbReference type="PANTHER" id="PTHR14359:SF6">
    <property type="entry name" value="PHOSPHOPANTOTHENOYLCYSTEINE DECARBOXYLASE"/>
    <property type="match status" value="1"/>
</dbReference>
<dbReference type="Pfam" id="PF02441">
    <property type="entry name" value="Flavoprotein"/>
    <property type="match status" value="1"/>
</dbReference>
<dbReference type="SUPFAM" id="SSF52507">
    <property type="entry name" value="Homo-oligomeric flavin-containing Cys decarboxylases, HFCD"/>
    <property type="match status" value="1"/>
</dbReference>
<name>CAB3_YEAST</name>